<evidence type="ECO:0000269" key="1">
    <source>
    </source>
</evidence>
<evidence type="ECO:0000303" key="2">
    <source>
    </source>
</evidence>
<evidence type="ECO:0000305" key="3"/>
<evidence type="ECO:0000305" key="4">
    <source>
    </source>
</evidence>
<comment type="function">
    <text evidence="1">Interacts with high affinity with oxytocin receptor (OXTR) (Ki=108 nM) and vasopressin V1a receptor (V1aR/AVPR1A) (Ki=319 nM). Acts as a partial agonist on OXTR (Kact=37 nM, 22% of oxytocin maximum activity at 10 uM), and as a full antagonist on V1aR (Kinact=329 nM).</text>
</comment>
<comment type="subcellular location">
    <subcellularLocation>
        <location evidence="1">Secreted</location>
    </subcellularLocation>
</comment>
<comment type="tissue specificity">
    <text evidence="4">Expressed by the venom duct.</text>
</comment>
<comment type="domain">
    <text evidence="3">The cysteine framework is C-C.</text>
</comment>
<comment type="mass spectrometry">
    <text>Monoisotopic mass.</text>
</comment>
<comment type="miscellaneous">
    <text evidence="1">Negative results: does not show binding with vasopressin V1b and V2 receptors (up to 10 uM). Shows a weak agonist activity on V1bR/AVPR1B (9% at 10 uM).</text>
</comment>
<comment type="similarity">
    <text evidence="3">Belongs to the vasopressin/oxytocin family.</text>
</comment>
<comment type="online information" name="Biological Magnetic Resonance Data Bank">
    <link uri="https://bmrb.io/data_library/summary/index.php?bmrbId=20007"/>
</comment>
<comment type="online information" name="Biological Magnetic Resonance Data Bank">
    <link uri="https://bmrb.io/data_library/summary/index.php?bmrbId=20008"/>
    <text>L7P mutant</text>
</comment>
<keyword id="KW-0027">Amidation</keyword>
<keyword id="KW-0903">Direct protein sequencing</keyword>
<keyword id="KW-1015">Disulfide bond</keyword>
<keyword id="KW-1213">G-protein coupled receptor impairing toxin</keyword>
<keyword id="KW-0964">Secreted</keyword>
<keyword id="KW-0800">Toxin</keyword>
<reference key="1">
    <citation type="journal article" date="2008" name="J. Biol. Chem.">
        <title>Conopressin-T from Conus tulipa reveals an antagonist switch in vasopressin-like peptides.</title>
        <authorList>
            <person name="Dutertre S."/>
            <person name="Croker D."/>
            <person name="Daly N.L."/>
            <person name="Andersson A."/>
            <person name="Muttenthaler M."/>
            <person name="Lumsden N.G."/>
            <person name="Craik D.J."/>
            <person name="Alewood P.F."/>
            <person name="Guillon G."/>
            <person name="Lewis R.J."/>
        </authorList>
    </citation>
    <scope>PROTEIN SEQUENCE</scope>
    <scope>FUNCTION</scope>
    <scope>SUBCELLULAR LOCATION</scope>
    <scope>MUTAGENESIS OF LEU-7</scope>
    <scope>STRUCTURE BY NMR</scope>
    <scope>DISULFIDE BOND</scope>
    <scope>AMIDATION AT VAL-9</scope>
    <scope>MASS SPECTROMETRY</scope>
    <scope>SYNTHESIS</scope>
    <source>
        <tissue>Venom</tissue>
    </source>
</reference>
<dbReference type="GO" id="GO:0005576">
    <property type="term" value="C:extracellular region"/>
    <property type="evidence" value="ECO:0007669"/>
    <property type="project" value="UniProtKB-SubCell"/>
</dbReference>
<dbReference type="GO" id="GO:0090729">
    <property type="term" value="F:toxin activity"/>
    <property type="evidence" value="ECO:0007669"/>
    <property type="project" value="UniProtKB-KW"/>
</dbReference>
<sequence>CYIQNCLRV</sequence>
<organism>
    <name type="scientific">Conus tulipa</name>
    <name type="common">Fish-hunting cone snail</name>
    <name type="synonym">Tulip cone</name>
    <dbReference type="NCBI Taxonomy" id="6495"/>
    <lineage>
        <taxon>Eukaryota</taxon>
        <taxon>Metazoa</taxon>
        <taxon>Spiralia</taxon>
        <taxon>Lophotrochozoa</taxon>
        <taxon>Mollusca</taxon>
        <taxon>Gastropoda</taxon>
        <taxon>Caenogastropoda</taxon>
        <taxon>Neogastropoda</taxon>
        <taxon>Conoidea</taxon>
        <taxon>Conidae</taxon>
        <taxon>Conus</taxon>
        <taxon>Gastridium</taxon>
    </lineage>
</organism>
<protein>
    <recommendedName>
        <fullName evidence="2">Conopressin-T</fullName>
        <shortName evidence="2">Con-T</shortName>
    </recommendedName>
</protein>
<name>CONOT_CONTU</name>
<accession>P0DL76</accession>
<feature type="peptide" id="PRO_0000442232" description="Conopressin-T" evidence="1">
    <location>
        <begin position="1"/>
        <end position="9"/>
    </location>
</feature>
<feature type="site" description="Important residue for antagonist activity on V1aR/AVPR1A (a Gly in this position produces agonist activity)" evidence="1">
    <location>
        <position position="9"/>
    </location>
</feature>
<feature type="modified residue" description="Valine amide" evidence="1">
    <location>
        <position position="9"/>
    </location>
</feature>
<feature type="disulfide bond" evidence="1">
    <location>
        <begin position="1"/>
        <end position="6"/>
    </location>
</feature>
<feature type="mutagenesis site" description="8-fold increase in affinity for V1aR/AVPR1A, no change in affinity for V1b and oxytocin receptors (OXTR) and gain of affinity for V2R (Ki=1.8 uM)." evidence="1">
    <original>L</original>
    <variation>P</variation>
    <location>
        <position position="7"/>
    </location>
</feature>
<proteinExistence type="evidence at protein level"/>